<accession>Q9T7L8</accession>
<name>CYB_MICPI</name>
<organism>
    <name type="scientific">Microtus pinetorum</name>
    <name type="common">Woodland vole</name>
    <name type="synonym">Pitymys pinetorum</name>
    <dbReference type="NCBI Taxonomy" id="111839"/>
    <lineage>
        <taxon>Eukaryota</taxon>
        <taxon>Metazoa</taxon>
        <taxon>Chordata</taxon>
        <taxon>Craniata</taxon>
        <taxon>Vertebrata</taxon>
        <taxon>Euteleostomi</taxon>
        <taxon>Mammalia</taxon>
        <taxon>Eutheria</taxon>
        <taxon>Euarchontoglires</taxon>
        <taxon>Glires</taxon>
        <taxon>Rodentia</taxon>
        <taxon>Myomorpha</taxon>
        <taxon>Muroidea</taxon>
        <taxon>Cricetidae</taxon>
        <taxon>Arvicolinae</taxon>
        <taxon>Microtus</taxon>
    </lineage>
</organism>
<sequence>MTIMRKKHPLIKIINHSFIDLPTPSNISSWWNFGSLLGLCLTIQILTGLFLAMHYTSDTSTAFSSVAHICRDVNYGWLIRYMHANGASMFFICLFLHVGRGVYYGSYNMIETWNMGIILLFAVMATAFMGYVLPWGQMSFWGATVITNLLSAIPYIGTTLVEWIWGGFSVDKATLTRFFAFHFILPFIITALVLVHLLFLHETGSNNPTGLNSDADKIPFHPYYTIKDFLGILILLMAFMILTLFFPDILGDPDNYTPANPLNTPPHIKPEWYFLFAYAILRSIPNKLGGVLALILSIVILAFMPLLHTSKQRTLTFRPITQTMYWILVADLLILTWIGGQPVEYPFIIIGQTASIAYFAIIVIFMPIAGMIENNILDLN</sequence>
<gene>
    <name type="primary">MT-CYB</name>
    <name type="synonym">COB</name>
    <name type="synonym">CYTB</name>
    <name type="synonym">MTCYB</name>
</gene>
<keyword id="KW-0249">Electron transport</keyword>
<keyword id="KW-0349">Heme</keyword>
<keyword id="KW-0408">Iron</keyword>
<keyword id="KW-0472">Membrane</keyword>
<keyword id="KW-0479">Metal-binding</keyword>
<keyword id="KW-0496">Mitochondrion</keyword>
<keyword id="KW-0999">Mitochondrion inner membrane</keyword>
<keyword id="KW-0679">Respiratory chain</keyword>
<keyword id="KW-0812">Transmembrane</keyword>
<keyword id="KW-1133">Transmembrane helix</keyword>
<keyword id="KW-0813">Transport</keyword>
<keyword id="KW-0830">Ubiquinone</keyword>
<feature type="chain" id="PRO_0000257919" description="Cytochrome b">
    <location>
        <begin position="1"/>
        <end position="380"/>
    </location>
</feature>
<feature type="transmembrane region" description="Helical" evidence="2">
    <location>
        <begin position="33"/>
        <end position="53"/>
    </location>
</feature>
<feature type="transmembrane region" description="Helical" evidence="2">
    <location>
        <begin position="77"/>
        <end position="98"/>
    </location>
</feature>
<feature type="transmembrane region" description="Helical" evidence="2">
    <location>
        <begin position="113"/>
        <end position="133"/>
    </location>
</feature>
<feature type="transmembrane region" description="Helical" evidence="2">
    <location>
        <begin position="178"/>
        <end position="198"/>
    </location>
</feature>
<feature type="transmembrane region" description="Helical" evidence="2">
    <location>
        <begin position="226"/>
        <end position="246"/>
    </location>
</feature>
<feature type="transmembrane region" description="Helical" evidence="2">
    <location>
        <begin position="288"/>
        <end position="308"/>
    </location>
</feature>
<feature type="transmembrane region" description="Helical" evidence="2">
    <location>
        <begin position="320"/>
        <end position="340"/>
    </location>
</feature>
<feature type="transmembrane region" description="Helical" evidence="2">
    <location>
        <begin position="347"/>
        <end position="367"/>
    </location>
</feature>
<feature type="binding site" description="axial binding residue" evidence="2">
    <location>
        <position position="83"/>
    </location>
    <ligand>
        <name>heme b</name>
        <dbReference type="ChEBI" id="CHEBI:60344"/>
        <label>b562</label>
    </ligand>
    <ligandPart>
        <name>Fe</name>
        <dbReference type="ChEBI" id="CHEBI:18248"/>
    </ligandPart>
</feature>
<feature type="binding site" description="axial binding residue" evidence="2">
    <location>
        <position position="97"/>
    </location>
    <ligand>
        <name>heme b</name>
        <dbReference type="ChEBI" id="CHEBI:60344"/>
        <label>b566</label>
    </ligand>
    <ligandPart>
        <name>Fe</name>
        <dbReference type="ChEBI" id="CHEBI:18248"/>
    </ligandPart>
</feature>
<feature type="binding site" description="axial binding residue" evidence="2">
    <location>
        <position position="182"/>
    </location>
    <ligand>
        <name>heme b</name>
        <dbReference type="ChEBI" id="CHEBI:60344"/>
        <label>b562</label>
    </ligand>
    <ligandPart>
        <name>Fe</name>
        <dbReference type="ChEBI" id="CHEBI:18248"/>
    </ligandPart>
</feature>
<feature type="binding site" description="axial binding residue" evidence="2">
    <location>
        <position position="196"/>
    </location>
    <ligand>
        <name>heme b</name>
        <dbReference type="ChEBI" id="CHEBI:60344"/>
        <label>b566</label>
    </ligand>
    <ligandPart>
        <name>Fe</name>
        <dbReference type="ChEBI" id="CHEBI:18248"/>
    </ligandPart>
</feature>
<feature type="binding site" evidence="2">
    <location>
        <position position="201"/>
    </location>
    <ligand>
        <name>a ubiquinone</name>
        <dbReference type="ChEBI" id="CHEBI:16389"/>
    </ligand>
</feature>
<protein>
    <recommendedName>
        <fullName>Cytochrome b</fullName>
    </recommendedName>
    <alternativeName>
        <fullName>Complex III subunit 3</fullName>
    </alternativeName>
    <alternativeName>
        <fullName>Complex III subunit III</fullName>
    </alternativeName>
    <alternativeName>
        <fullName>Cytochrome b-c1 complex subunit 3</fullName>
    </alternativeName>
    <alternativeName>
        <fullName>Ubiquinol-cytochrome-c reductase complex cytochrome b subunit</fullName>
    </alternativeName>
</protein>
<comment type="function">
    <text evidence="2">Component of the ubiquinol-cytochrome c reductase complex (complex III or cytochrome b-c1 complex) that is part of the mitochondrial respiratory chain. The b-c1 complex mediates electron transfer from ubiquinol to cytochrome c. Contributes to the generation of a proton gradient across the mitochondrial membrane that is then used for ATP synthesis.</text>
</comment>
<comment type="cofactor">
    <cofactor evidence="2">
        <name>heme b</name>
        <dbReference type="ChEBI" id="CHEBI:60344"/>
    </cofactor>
    <text evidence="2">Binds 2 heme b groups non-covalently.</text>
</comment>
<comment type="subunit">
    <text evidence="2">The cytochrome bc1 complex contains 11 subunits: 3 respiratory subunits (MT-CYB, CYC1 and UQCRFS1), 2 core proteins (UQCRC1 and UQCRC2) and 6 low-molecular weight proteins (UQCRH/QCR6, UQCRB/QCR7, UQCRQ/QCR8, UQCR10/QCR9, UQCR11/QCR10 and a cleavage product of UQCRFS1). This cytochrome bc1 complex then forms a dimer.</text>
</comment>
<comment type="subcellular location">
    <subcellularLocation>
        <location evidence="2">Mitochondrion inner membrane</location>
        <topology evidence="2">Multi-pass membrane protein</topology>
    </subcellularLocation>
</comment>
<comment type="miscellaneous">
    <text evidence="1">Heme 1 (or BL or b562) is low-potential and absorbs at about 562 nm, and heme 2 (or BH or b566) is high-potential and absorbs at about 566 nm.</text>
</comment>
<comment type="similarity">
    <text evidence="3 4">Belongs to the cytochrome b family.</text>
</comment>
<comment type="caution">
    <text evidence="2">The full-length protein contains only eight transmembrane helices, not nine as predicted by bioinformatics tools.</text>
</comment>
<dbReference type="EMBL" id="AF163904">
    <property type="protein sequence ID" value="AAF24196.1"/>
    <property type="molecule type" value="Genomic_DNA"/>
</dbReference>
<dbReference type="SMR" id="Q9T7L8"/>
<dbReference type="GO" id="GO:0005743">
    <property type="term" value="C:mitochondrial inner membrane"/>
    <property type="evidence" value="ECO:0007669"/>
    <property type="project" value="UniProtKB-SubCell"/>
</dbReference>
<dbReference type="GO" id="GO:0045275">
    <property type="term" value="C:respiratory chain complex III"/>
    <property type="evidence" value="ECO:0007669"/>
    <property type="project" value="InterPro"/>
</dbReference>
<dbReference type="GO" id="GO:0046872">
    <property type="term" value="F:metal ion binding"/>
    <property type="evidence" value="ECO:0007669"/>
    <property type="project" value="UniProtKB-KW"/>
</dbReference>
<dbReference type="GO" id="GO:0008121">
    <property type="term" value="F:ubiquinol-cytochrome-c reductase activity"/>
    <property type="evidence" value="ECO:0007669"/>
    <property type="project" value="InterPro"/>
</dbReference>
<dbReference type="GO" id="GO:0006122">
    <property type="term" value="P:mitochondrial electron transport, ubiquinol to cytochrome c"/>
    <property type="evidence" value="ECO:0007669"/>
    <property type="project" value="TreeGrafter"/>
</dbReference>
<dbReference type="CDD" id="cd00290">
    <property type="entry name" value="cytochrome_b_C"/>
    <property type="match status" value="1"/>
</dbReference>
<dbReference type="CDD" id="cd00284">
    <property type="entry name" value="Cytochrome_b_N"/>
    <property type="match status" value="1"/>
</dbReference>
<dbReference type="FunFam" id="1.20.810.10:FF:000002">
    <property type="entry name" value="Cytochrome b"/>
    <property type="match status" value="1"/>
</dbReference>
<dbReference type="Gene3D" id="1.20.810.10">
    <property type="entry name" value="Cytochrome Bc1 Complex, Chain C"/>
    <property type="match status" value="1"/>
</dbReference>
<dbReference type="InterPro" id="IPR005798">
    <property type="entry name" value="Cyt_b/b6_C"/>
</dbReference>
<dbReference type="InterPro" id="IPR036150">
    <property type="entry name" value="Cyt_b/b6_C_sf"/>
</dbReference>
<dbReference type="InterPro" id="IPR005797">
    <property type="entry name" value="Cyt_b/b6_N"/>
</dbReference>
<dbReference type="InterPro" id="IPR027387">
    <property type="entry name" value="Cytb/b6-like_sf"/>
</dbReference>
<dbReference type="InterPro" id="IPR030689">
    <property type="entry name" value="Cytochrome_b"/>
</dbReference>
<dbReference type="InterPro" id="IPR048260">
    <property type="entry name" value="Cytochrome_b_C_euk/bac"/>
</dbReference>
<dbReference type="InterPro" id="IPR048259">
    <property type="entry name" value="Cytochrome_b_N_euk/bac"/>
</dbReference>
<dbReference type="InterPro" id="IPR016174">
    <property type="entry name" value="Di-haem_cyt_TM"/>
</dbReference>
<dbReference type="PANTHER" id="PTHR19271">
    <property type="entry name" value="CYTOCHROME B"/>
    <property type="match status" value="1"/>
</dbReference>
<dbReference type="PANTHER" id="PTHR19271:SF16">
    <property type="entry name" value="CYTOCHROME B"/>
    <property type="match status" value="1"/>
</dbReference>
<dbReference type="Pfam" id="PF00032">
    <property type="entry name" value="Cytochrom_B_C"/>
    <property type="match status" value="1"/>
</dbReference>
<dbReference type="Pfam" id="PF00033">
    <property type="entry name" value="Cytochrome_B"/>
    <property type="match status" value="1"/>
</dbReference>
<dbReference type="PIRSF" id="PIRSF038885">
    <property type="entry name" value="COB"/>
    <property type="match status" value="1"/>
</dbReference>
<dbReference type="SUPFAM" id="SSF81648">
    <property type="entry name" value="a domain/subunit of cytochrome bc1 complex (Ubiquinol-cytochrome c reductase)"/>
    <property type="match status" value="1"/>
</dbReference>
<dbReference type="SUPFAM" id="SSF81342">
    <property type="entry name" value="Transmembrane di-heme cytochromes"/>
    <property type="match status" value="1"/>
</dbReference>
<dbReference type="PROSITE" id="PS51003">
    <property type="entry name" value="CYTB_CTER"/>
    <property type="match status" value="1"/>
</dbReference>
<dbReference type="PROSITE" id="PS51002">
    <property type="entry name" value="CYTB_NTER"/>
    <property type="match status" value="1"/>
</dbReference>
<geneLocation type="mitochondrion"/>
<evidence type="ECO:0000250" key="1"/>
<evidence type="ECO:0000250" key="2">
    <source>
        <dbReference type="UniProtKB" id="P00157"/>
    </source>
</evidence>
<evidence type="ECO:0000255" key="3">
    <source>
        <dbReference type="PROSITE-ProRule" id="PRU00967"/>
    </source>
</evidence>
<evidence type="ECO:0000255" key="4">
    <source>
        <dbReference type="PROSITE-ProRule" id="PRU00968"/>
    </source>
</evidence>
<proteinExistence type="inferred from homology"/>
<reference key="1">
    <citation type="journal article" date="2000" name="J. Mammal.">
        <title>Molecular systematics of a holarctic rodent (Microtus, Muridae).</title>
        <authorList>
            <person name="Conroy C.J."/>
            <person name="Cook J.A."/>
        </authorList>
    </citation>
    <scope>NUCLEOTIDE SEQUENCE [GENOMIC DNA]</scope>
</reference>